<proteinExistence type="evidence at protein level"/>
<sequence>MDLHTAVYNAAHDGKLPLLQKLLAGRGREELEELLGEVAGGGTPLLIAARRGHLDVVEYLVDHCGASVEASGSVHFDGETIEGAPPLWAASAAGHLAVVRSLLRRGASVNRTTRTNSTPLRAACFDGHLDVVRYLVGEHKADLEVANRHGHTCLMISCYKGHREIARYLLERGAQVNRRSAKGNTALHDCAESGSLEILQLLLGCHARMERDGYGMTPLLAASVTGHTNIVEYLIQEQPGHEQLSGTELPGEGSSQVAGNHCSTPEEAEPYESCCPTSREAAVEALELLGATYVDKKRDLLGALKHWRRAMELRHQGGGYLPKPEPQQLVLAYDYSREVTTPQELEALITDPDEMRMQALLIRERILGPSHPDTSYYIRYRGAVYADSGNFERCIRLWKYALDMQQNNLEPLSPMTASSFLSFAELFSYVLQDRSAKGNLGMQLGFADLMGVLSKGVREVERALQLPKEPGDSAQFTKAIAIILHLLYLLEKVECTPSQEHLKHQTVYRLLKCAPRGKNGFTPLHMAVDKETTNVGRYRVGVFPSLQVVKVLLDCGADPDSRDFDNNTPLHIAAQNNCPAIMDALIEAGAHMDATNAFKKTAYELLDSKLLAKSTVQPFNYVTLQCLAARALDRNKVPYKGFIPEELEAFIQLH</sequence>
<keyword id="KW-0040">ANK repeat</keyword>
<keyword id="KW-0963">Cytoplasm</keyword>
<keyword id="KW-0496">Mitochondrion</keyword>
<keyword id="KW-0597">Phosphoprotein</keyword>
<keyword id="KW-1185">Reference proteome</keyword>
<keyword id="KW-0677">Repeat</keyword>
<keyword id="KW-0802">TPR repeat</keyword>
<keyword id="KW-0833">Ubl conjugation pathway</keyword>
<name>FM1AA_MOUSE</name>
<gene>
    <name evidence="14" type="primary">Fem1aa</name>
    <name evidence="11" type="synonym">Eprap</name>
    <name evidence="12" type="synonym">Fem1a</name>
</gene>
<accession>Q9Z2G1</accession>
<accession>Q3U2C2</accession>
<accession>Q8C4V3</accession>
<accession>Q8C6D9</accession>
<accession>Q8CBW9</accession>
<accession>Q9DBC6</accession>
<protein>
    <recommendedName>
        <fullName evidence="13">Protein fem-1 homolog A-A</fullName>
        <shortName evidence="13">FEM1a-A</shortName>
    </recommendedName>
    <alternativeName>
        <fullName evidence="13">FEM1-alpha-A</fullName>
    </alternativeName>
    <alternativeName>
        <fullName evidence="11">Prostaglandin E receptor 4-associated protein</fullName>
    </alternativeName>
</protein>
<dbReference type="EMBL" id="AF064447">
    <property type="protein sequence ID" value="AAC82372.1"/>
    <property type="molecule type" value="Genomic_DNA"/>
</dbReference>
<dbReference type="EMBL" id="AK005041">
    <property type="protein sequence ID" value="BAB23768.1"/>
    <property type="molecule type" value="mRNA"/>
</dbReference>
<dbReference type="EMBL" id="AK034412">
    <property type="protein sequence ID" value="BAC28699.1"/>
    <property type="status" value="ALT_FRAME"/>
    <property type="molecule type" value="mRNA"/>
</dbReference>
<dbReference type="EMBL" id="AK075860">
    <property type="protein sequence ID" value="BAC36011.1"/>
    <property type="molecule type" value="mRNA"/>
</dbReference>
<dbReference type="EMBL" id="AK080978">
    <property type="protein sequence ID" value="BAC38102.1"/>
    <property type="molecule type" value="mRNA"/>
</dbReference>
<dbReference type="EMBL" id="AK147879">
    <property type="protein sequence ID" value="BAE28199.1"/>
    <property type="molecule type" value="mRNA"/>
</dbReference>
<dbReference type="EMBL" id="AK155363">
    <property type="protein sequence ID" value="BAE33219.1"/>
    <property type="molecule type" value="mRNA"/>
</dbReference>
<dbReference type="EMBL" id="BC009161">
    <property type="protein sequence ID" value="AAH09161.1"/>
    <property type="molecule type" value="mRNA"/>
</dbReference>
<dbReference type="EMBL" id="BC054382">
    <property type="protein sequence ID" value="AAH54382.1"/>
    <property type="molecule type" value="mRNA"/>
</dbReference>
<dbReference type="EMBL" id="BC110669">
    <property type="protein sequence ID" value="AAI10670.1"/>
    <property type="molecule type" value="mRNA"/>
</dbReference>
<dbReference type="CCDS" id="CCDS28899.1"/>
<dbReference type="RefSeq" id="NP_034322.3">
    <property type="nucleotide sequence ID" value="NM_010192.4"/>
</dbReference>
<dbReference type="SMR" id="Q9Z2G1"/>
<dbReference type="BioGRID" id="199630">
    <property type="interactions" value="2"/>
</dbReference>
<dbReference type="FunCoup" id="Q9Z2G1">
    <property type="interactions" value="303"/>
</dbReference>
<dbReference type="STRING" id="10090.ENSMUSP00000057996"/>
<dbReference type="iPTMnet" id="Q9Z2G1"/>
<dbReference type="PhosphoSitePlus" id="Q9Z2G1"/>
<dbReference type="PaxDb" id="10090-ENSMUSP00000057996"/>
<dbReference type="ProteomicsDB" id="267367"/>
<dbReference type="Pumba" id="Q9Z2G1"/>
<dbReference type="DNASU" id="14154"/>
<dbReference type="Ensembl" id="ENSMUST00000060253.5">
    <property type="protein sequence ID" value="ENSMUSP00000057996.4"/>
    <property type="gene ID" value="ENSMUSG00000043683.5"/>
</dbReference>
<dbReference type="GeneID" id="14154"/>
<dbReference type="KEGG" id="mmu:14154"/>
<dbReference type="UCSC" id="uc008dbk.2">
    <property type="organism name" value="mouse"/>
</dbReference>
<dbReference type="AGR" id="MGI:1335089"/>
<dbReference type="CTD" id="55527"/>
<dbReference type="MGI" id="MGI:1335089">
    <property type="gene designation" value="Fem1a"/>
</dbReference>
<dbReference type="VEuPathDB" id="HostDB:ENSMUSG00000043683"/>
<dbReference type="eggNOG" id="KOG0508">
    <property type="taxonomic scope" value="Eukaryota"/>
</dbReference>
<dbReference type="GeneTree" id="ENSGT00940000161210"/>
<dbReference type="HOGENOM" id="CLU_020042_2_0_1"/>
<dbReference type="InParanoid" id="Q9Z2G1"/>
<dbReference type="OMA" id="EQSSGHP"/>
<dbReference type="OrthoDB" id="4429489at2759"/>
<dbReference type="PhylomeDB" id="Q9Z2G1"/>
<dbReference type="TreeFam" id="TF351376"/>
<dbReference type="Reactome" id="R-MMU-8951664">
    <property type="pathway name" value="Neddylation"/>
</dbReference>
<dbReference type="UniPathway" id="UPA00143"/>
<dbReference type="BioGRID-ORCS" id="14154">
    <property type="hits" value="5 hits in 78 CRISPR screens"/>
</dbReference>
<dbReference type="ChiTaRS" id="Fem1a">
    <property type="organism name" value="mouse"/>
</dbReference>
<dbReference type="PRO" id="PR:Q9Z2G1"/>
<dbReference type="Proteomes" id="UP000000589">
    <property type="component" value="Chromosome 17"/>
</dbReference>
<dbReference type="RNAct" id="Q9Z2G1">
    <property type="molecule type" value="protein"/>
</dbReference>
<dbReference type="Bgee" id="ENSMUSG00000043683">
    <property type="expression patterns" value="Expressed in extensor digitorum longus and 244 other cell types or tissues"/>
</dbReference>
<dbReference type="GO" id="GO:0031462">
    <property type="term" value="C:Cul2-RING ubiquitin ligase complex"/>
    <property type="evidence" value="ECO:0000250"/>
    <property type="project" value="UniProtKB"/>
</dbReference>
<dbReference type="GO" id="GO:0005739">
    <property type="term" value="C:mitochondrion"/>
    <property type="evidence" value="ECO:0000314"/>
    <property type="project" value="UniProtKB"/>
</dbReference>
<dbReference type="GO" id="GO:1990756">
    <property type="term" value="F:ubiquitin-like ligase-substrate adaptor activity"/>
    <property type="evidence" value="ECO:0000250"/>
    <property type="project" value="UniProtKB"/>
</dbReference>
<dbReference type="GO" id="GO:0050728">
    <property type="term" value="P:negative regulation of inflammatory response"/>
    <property type="evidence" value="ECO:0000316"/>
    <property type="project" value="MGI"/>
</dbReference>
<dbReference type="GO" id="GO:0050729">
    <property type="term" value="P:positive regulation of inflammatory response"/>
    <property type="evidence" value="ECO:0000315"/>
    <property type="project" value="UniProtKB"/>
</dbReference>
<dbReference type="GO" id="GO:0016567">
    <property type="term" value="P:protein ubiquitination"/>
    <property type="evidence" value="ECO:0007669"/>
    <property type="project" value="UniProtKB-UniPathway"/>
</dbReference>
<dbReference type="GO" id="GO:0051438">
    <property type="term" value="P:regulation of ubiquitin-protein transferase activity"/>
    <property type="evidence" value="ECO:0000250"/>
    <property type="project" value="UniProtKB"/>
</dbReference>
<dbReference type="GO" id="GO:0140627">
    <property type="term" value="P:ubiquitin-dependent protein catabolic process via the C-end degron rule pathway"/>
    <property type="evidence" value="ECO:0000250"/>
    <property type="project" value="UniProtKB"/>
</dbReference>
<dbReference type="FunFam" id="1.25.40.20:FF:000076">
    <property type="entry name" value="Fem-1 homolog c (C.elegans)"/>
    <property type="match status" value="1"/>
</dbReference>
<dbReference type="FunFam" id="1.25.40.10:FF:000261">
    <property type="entry name" value="protein fem-1 homolog A"/>
    <property type="match status" value="1"/>
</dbReference>
<dbReference type="FunFam" id="1.25.40.20:FF:000133">
    <property type="entry name" value="protein fem-1 homolog A"/>
    <property type="match status" value="1"/>
</dbReference>
<dbReference type="FunFam" id="1.25.40.20:FF:000209">
    <property type="entry name" value="protein fem-1 homolog A"/>
    <property type="match status" value="1"/>
</dbReference>
<dbReference type="Gene3D" id="1.25.40.20">
    <property type="entry name" value="Ankyrin repeat-containing domain"/>
    <property type="match status" value="3"/>
</dbReference>
<dbReference type="Gene3D" id="1.25.40.10">
    <property type="entry name" value="Tetratricopeptide repeat domain"/>
    <property type="match status" value="1"/>
</dbReference>
<dbReference type="InterPro" id="IPR002110">
    <property type="entry name" value="Ankyrin_rpt"/>
</dbReference>
<dbReference type="InterPro" id="IPR036770">
    <property type="entry name" value="Ankyrin_rpt-contain_sf"/>
</dbReference>
<dbReference type="InterPro" id="IPR011990">
    <property type="entry name" value="TPR-like_helical_dom_sf"/>
</dbReference>
<dbReference type="PANTHER" id="PTHR24173">
    <property type="entry name" value="ANKYRIN REPEAT CONTAINING"/>
    <property type="match status" value="1"/>
</dbReference>
<dbReference type="PANTHER" id="PTHR24173:SF78">
    <property type="entry name" value="PROTEIN FEM-1 HOMOLOG B"/>
    <property type="match status" value="1"/>
</dbReference>
<dbReference type="Pfam" id="PF00023">
    <property type="entry name" value="Ank"/>
    <property type="match status" value="1"/>
</dbReference>
<dbReference type="Pfam" id="PF12796">
    <property type="entry name" value="Ank_2"/>
    <property type="match status" value="3"/>
</dbReference>
<dbReference type="PRINTS" id="PR01415">
    <property type="entry name" value="ANKYRIN"/>
</dbReference>
<dbReference type="SMART" id="SM00248">
    <property type="entry name" value="ANK"/>
    <property type="match status" value="9"/>
</dbReference>
<dbReference type="SUPFAM" id="SSF48403">
    <property type="entry name" value="Ankyrin repeat"/>
    <property type="match status" value="2"/>
</dbReference>
<dbReference type="SUPFAM" id="SSF48452">
    <property type="entry name" value="TPR-like"/>
    <property type="match status" value="1"/>
</dbReference>
<dbReference type="PROSITE" id="PS50297">
    <property type="entry name" value="ANK_REP_REGION"/>
    <property type="match status" value="2"/>
</dbReference>
<dbReference type="PROSITE" id="PS50088">
    <property type="entry name" value="ANK_REPEAT"/>
    <property type="match status" value="7"/>
</dbReference>
<evidence type="ECO:0000250" key="1">
    <source>
        <dbReference type="UniProtKB" id="Q9BSK4"/>
    </source>
</evidence>
<evidence type="ECO:0000256" key="2">
    <source>
        <dbReference type="SAM" id="MobiDB-lite"/>
    </source>
</evidence>
<evidence type="ECO:0000269" key="3">
    <source>
    </source>
</evidence>
<evidence type="ECO:0000269" key="4">
    <source>
    </source>
</evidence>
<evidence type="ECO:0000269" key="5">
    <source>
    </source>
</evidence>
<evidence type="ECO:0000269" key="6">
    <source>
    </source>
</evidence>
<evidence type="ECO:0000269" key="7">
    <source>
    </source>
</evidence>
<evidence type="ECO:0000269" key="8">
    <source>
    </source>
</evidence>
<evidence type="ECO:0000269" key="9">
    <source>
    </source>
</evidence>
<evidence type="ECO:0000269" key="10">
    <source>
    </source>
</evidence>
<evidence type="ECO:0000303" key="11">
    <source>
    </source>
</evidence>
<evidence type="ECO:0000303" key="12">
    <source>
    </source>
</evidence>
<evidence type="ECO:0000305" key="13"/>
<evidence type="ECO:0000312" key="14">
    <source>
        <dbReference type="MGI" id="MGI:1335089"/>
    </source>
</evidence>
<comment type="function">
    <text evidence="1 3 5 6">Substrate-recognition component of a Cul2-RING (CRL2) E3 ubiquitin-protein ligase complex of the DesCEND (destruction via C-end degrons) pathway, which recognizes a C-degron located at the extreme C terminus of target proteins, leading to their ubiquitination and degradation (By similarity). The C-degron recognized by the DesCEND pathway is usually a motif of less than ten residues and can be present in full-length proteins, truncated proteins or proteolytically cleaved forms (By similarity). The CRL2(FEM1A) complex specifically recognizes proteins with an arginine at the C-terminus: recognizes and binds proteins ending with -Lys/Arg-Xaa-Arg and -Lys/Arg-Xaa-Xaa-Arg C-degrons, such as SIL1 or OR51B2, leading to their ubiquitination and degradation (By similarity). Involved in PGE2-EP4-mediated inhibition of inflammation of macrophages via interaction with NFKB1 and PTGER4 (PubMed:18270204, PubMed:26439841). Promotes inflammation in brain microglia through MAP2K4/MKK4-mediated signaling (PubMed:27315781).</text>
</comment>
<comment type="pathway">
    <text evidence="1">Protein modification; protein ubiquitination.</text>
</comment>
<comment type="subunit">
    <text evidence="1 3">Component of a CRL2 E3 ubiquitin-protein ligase complex, also named ECS (Elongin BC-CUL2/5-SOCS-box protein) complex, composed of CUL2, Elongin BC (ELOB and ELOC), RBX1 and substrate-specific adapter FEM1A (By similarity). Interacts with PTGER4 (PubMed:18270204). Interacts with NFKB1; the interaction is direct (PubMed:18270204).</text>
</comment>
<comment type="subcellular location">
    <subcellularLocation>
        <location evidence="4">Mitochondrion</location>
    </subcellularLocation>
    <subcellularLocation>
        <location evidence="1">Cytoplasm</location>
    </subcellularLocation>
</comment>
<comment type="tissue specificity">
    <text evidence="4 10">Preferentially expressed in cardiac muscle, brain and liver (at protein level) (PubMed:19406122, PubMed:9828124). Also expressed in skeletal muscle (PubMed:9828124).</text>
</comment>
<comment type="developmental stage">
    <text evidence="10">Expressed during embryogenesis.</text>
</comment>
<comment type="induction">
    <text evidence="4">Up-regulated in ischemic hearts.</text>
</comment>
<comment type="PTM">
    <text evidence="4 7">Phosphorylated; highly phosphorylated in myoblasts and myotubes (PubMed:19406122). Phosphorylation at Ser-108 and Ser-608 promote PGE2-EP4-mediated inhibition of inflammation (PubMed:27799315). Dephosphorylated by protein phosphatase 2A (PP2A) (PubMed:27799315).</text>
</comment>
<comment type="disruption phenotype">
    <text evidence="5 6 8 9">No visible phenotype in normal conditions: mice are fertile and develop normally without any apparent malformation (PubMed:26439841, PubMed:27315781). In mice model of chronic inflammation, mice develop more severe colitis induced by dextran sodium sulfate (DSS) (PubMed:26439841). Mice display less microglial accumulation; decreased microglial activation is observed in the brain after systemic lipopolysaccharide administration (PubMed:27315781). Mice also show behavioral abnormalities, possibly caused by monoamine deficits (PubMed:28336432). Mice display reduced anxiety-like behavior and brain inflammation in a model of Alzheimer disease (PubMed:28624505).</text>
</comment>
<comment type="similarity">
    <text evidence="13">Belongs to the fem-1 family.</text>
</comment>
<comment type="sequence caution" evidence="13">
    <conflict type="frameshift">
        <sequence resource="EMBL-CDS" id="BAC28699"/>
    </conflict>
</comment>
<organism>
    <name type="scientific">Mus musculus</name>
    <name type="common">Mouse</name>
    <dbReference type="NCBI Taxonomy" id="10090"/>
    <lineage>
        <taxon>Eukaryota</taxon>
        <taxon>Metazoa</taxon>
        <taxon>Chordata</taxon>
        <taxon>Craniata</taxon>
        <taxon>Vertebrata</taxon>
        <taxon>Euteleostomi</taxon>
        <taxon>Mammalia</taxon>
        <taxon>Eutheria</taxon>
        <taxon>Euarchontoglires</taxon>
        <taxon>Glires</taxon>
        <taxon>Rodentia</taxon>
        <taxon>Myomorpha</taxon>
        <taxon>Muroidea</taxon>
        <taxon>Muridae</taxon>
        <taxon>Murinae</taxon>
        <taxon>Mus</taxon>
        <taxon>Mus</taxon>
    </lineage>
</organism>
<reference key="1">
    <citation type="journal article" date="1998" name="Genomics">
        <title>The murine fem1 gene family: homologs of the Caenorhabditis elegans sex-determination protein FEM-1.</title>
        <authorList>
            <person name="Ventura-Holman T."/>
            <person name="Seldin M.F."/>
            <person name="Li W."/>
            <person name="Maher J.F."/>
        </authorList>
    </citation>
    <scope>NUCLEOTIDE SEQUENCE [GENOMIC DNA]</scope>
    <scope>TISSUE SPECIFICITY</scope>
    <scope>DEVELOPMENTAL STAGE</scope>
    <source>
        <strain>129/Ola</strain>
    </source>
</reference>
<reference key="2">
    <citation type="journal article" date="2005" name="Science">
        <title>The transcriptional landscape of the mammalian genome.</title>
        <authorList>
            <person name="Carninci P."/>
            <person name="Kasukawa T."/>
            <person name="Katayama S."/>
            <person name="Gough J."/>
            <person name="Frith M.C."/>
            <person name="Maeda N."/>
            <person name="Oyama R."/>
            <person name="Ravasi T."/>
            <person name="Lenhard B."/>
            <person name="Wells C."/>
            <person name="Kodzius R."/>
            <person name="Shimokawa K."/>
            <person name="Bajic V.B."/>
            <person name="Brenner S.E."/>
            <person name="Batalov S."/>
            <person name="Forrest A.R."/>
            <person name="Zavolan M."/>
            <person name="Davis M.J."/>
            <person name="Wilming L.G."/>
            <person name="Aidinis V."/>
            <person name="Allen J.E."/>
            <person name="Ambesi-Impiombato A."/>
            <person name="Apweiler R."/>
            <person name="Aturaliya R.N."/>
            <person name="Bailey T.L."/>
            <person name="Bansal M."/>
            <person name="Baxter L."/>
            <person name="Beisel K.W."/>
            <person name="Bersano T."/>
            <person name="Bono H."/>
            <person name="Chalk A.M."/>
            <person name="Chiu K.P."/>
            <person name="Choudhary V."/>
            <person name="Christoffels A."/>
            <person name="Clutterbuck D.R."/>
            <person name="Crowe M.L."/>
            <person name="Dalla E."/>
            <person name="Dalrymple B.P."/>
            <person name="de Bono B."/>
            <person name="Della Gatta G."/>
            <person name="di Bernardo D."/>
            <person name="Down T."/>
            <person name="Engstrom P."/>
            <person name="Fagiolini M."/>
            <person name="Faulkner G."/>
            <person name="Fletcher C.F."/>
            <person name="Fukushima T."/>
            <person name="Furuno M."/>
            <person name="Futaki S."/>
            <person name="Gariboldi M."/>
            <person name="Georgii-Hemming P."/>
            <person name="Gingeras T.R."/>
            <person name="Gojobori T."/>
            <person name="Green R.E."/>
            <person name="Gustincich S."/>
            <person name="Harbers M."/>
            <person name="Hayashi Y."/>
            <person name="Hensch T.K."/>
            <person name="Hirokawa N."/>
            <person name="Hill D."/>
            <person name="Huminiecki L."/>
            <person name="Iacono M."/>
            <person name="Ikeo K."/>
            <person name="Iwama A."/>
            <person name="Ishikawa T."/>
            <person name="Jakt M."/>
            <person name="Kanapin A."/>
            <person name="Katoh M."/>
            <person name="Kawasawa Y."/>
            <person name="Kelso J."/>
            <person name="Kitamura H."/>
            <person name="Kitano H."/>
            <person name="Kollias G."/>
            <person name="Krishnan S.P."/>
            <person name="Kruger A."/>
            <person name="Kummerfeld S.K."/>
            <person name="Kurochkin I.V."/>
            <person name="Lareau L.F."/>
            <person name="Lazarevic D."/>
            <person name="Lipovich L."/>
            <person name="Liu J."/>
            <person name="Liuni S."/>
            <person name="McWilliam S."/>
            <person name="Madan Babu M."/>
            <person name="Madera M."/>
            <person name="Marchionni L."/>
            <person name="Matsuda H."/>
            <person name="Matsuzawa S."/>
            <person name="Miki H."/>
            <person name="Mignone F."/>
            <person name="Miyake S."/>
            <person name="Morris K."/>
            <person name="Mottagui-Tabar S."/>
            <person name="Mulder N."/>
            <person name="Nakano N."/>
            <person name="Nakauchi H."/>
            <person name="Ng P."/>
            <person name="Nilsson R."/>
            <person name="Nishiguchi S."/>
            <person name="Nishikawa S."/>
            <person name="Nori F."/>
            <person name="Ohara O."/>
            <person name="Okazaki Y."/>
            <person name="Orlando V."/>
            <person name="Pang K.C."/>
            <person name="Pavan W.J."/>
            <person name="Pavesi G."/>
            <person name="Pesole G."/>
            <person name="Petrovsky N."/>
            <person name="Piazza S."/>
            <person name="Reed J."/>
            <person name="Reid J.F."/>
            <person name="Ring B.Z."/>
            <person name="Ringwald M."/>
            <person name="Rost B."/>
            <person name="Ruan Y."/>
            <person name="Salzberg S.L."/>
            <person name="Sandelin A."/>
            <person name="Schneider C."/>
            <person name="Schoenbach C."/>
            <person name="Sekiguchi K."/>
            <person name="Semple C.A."/>
            <person name="Seno S."/>
            <person name="Sessa L."/>
            <person name="Sheng Y."/>
            <person name="Shibata Y."/>
            <person name="Shimada H."/>
            <person name="Shimada K."/>
            <person name="Silva D."/>
            <person name="Sinclair B."/>
            <person name="Sperling S."/>
            <person name="Stupka E."/>
            <person name="Sugiura K."/>
            <person name="Sultana R."/>
            <person name="Takenaka Y."/>
            <person name="Taki K."/>
            <person name="Tammoja K."/>
            <person name="Tan S.L."/>
            <person name="Tang S."/>
            <person name="Taylor M.S."/>
            <person name="Tegner J."/>
            <person name="Teichmann S.A."/>
            <person name="Ueda H.R."/>
            <person name="van Nimwegen E."/>
            <person name="Verardo R."/>
            <person name="Wei C.L."/>
            <person name="Yagi K."/>
            <person name="Yamanishi H."/>
            <person name="Zabarovsky E."/>
            <person name="Zhu S."/>
            <person name="Zimmer A."/>
            <person name="Hide W."/>
            <person name="Bult C."/>
            <person name="Grimmond S.M."/>
            <person name="Teasdale R.D."/>
            <person name="Liu E.T."/>
            <person name="Brusic V."/>
            <person name="Quackenbush J."/>
            <person name="Wahlestedt C."/>
            <person name="Mattick J.S."/>
            <person name="Hume D.A."/>
            <person name="Kai C."/>
            <person name="Sasaki D."/>
            <person name="Tomaru Y."/>
            <person name="Fukuda S."/>
            <person name="Kanamori-Katayama M."/>
            <person name="Suzuki M."/>
            <person name="Aoki J."/>
            <person name="Arakawa T."/>
            <person name="Iida J."/>
            <person name="Imamura K."/>
            <person name="Itoh M."/>
            <person name="Kato T."/>
            <person name="Kawaji H."/>
            <person name="Kawagashira N."/>
            <person name="Kawashima T."/>
            <person name="Kojima M."/>
            <person name="Kondo S."/>
            <person name="Konno H."/>
            <person name="Nakano K."/>
            <person name="Ninomiya N."/>
            <person name="Nishio T."/>
            <person name="Okada M."/>
            <person name="Plessy C."/>
            <person name="Shibata K."/>
            <person name="Shiraki T."/>
            <person name="Suzuki S."/>
            <person name="Tagami M."/>
            <person name="Waki K."/>
            <person name="Watahiki A."/>
            <person name="Okamura-Oho Y."/>
            <person name="Suzuki H."/>
            <person name="Kawai J."/>
            <person name="Hayashizaki Y."/>
        </authorList>
    </citation>
    <scope>NUCLEOTIDE SEQUENCE [LARGE SCALE MRNA]</scope>
    <source>
        <strain>C57BL/6J</strain>
        <strain>NOD</strain>
        <tissue>Diencephalon</tissue>
        <tissue>Liver</tissue>
        <tissue>Thymus</tissue>
        <tissue>Tongue</tissue>
    </source>
</reference>
<reference key="3">
    <citation type="journal article" date="2004" name="Genome Res.">
        <title>The status, quality, and expansion of the NIH full-length cDNA project: the Mammalian Gene Collection (MGC).</title>
        <authorList>
            <consortium name="The MGC Project Team"/>
        </authorList>
    </citation>
    <scope>NUCLEOTIDE SEQUENCE [LARGE SCALE MRNA]</scope>
    <source>
        <strain>FVB/N</strain>
        <tissue>Eye</tissue>
        <tissue>Kidney</tissue>
        <tissue>Mammary tumor</tissue>
    </source>
</reference>
<reference key="4">
    <citation type="journal article" date="2008" name="J. Biol. Chem.">
        <title>Prostaglandin E receptor type 4-associated protein interacts directly with NF-kappaB1 and attenuates macrophage activation.</title>
        <authorList>
            <person name="Minami M."/>
            <person name="Shimizu K."/>
            <person name="Okamoto Y."/>
            <person name="Folco E."/>
            <person name="Ilasaca M.L."/>
            <person name="Feinberg M.W."/>
            <person name="Aikawa M."/>
            <person name="Libby P."/>
        </authorList>
    </citation>
    <scope>FUNCTION</scope>
    <scope>INTERACTION WITH NFKB1 AND PTGER4</scope>
</reference>
<reference key="5">
    <citation type="journal article" date="2009" name="FEBS Lett.">
        <title>Fem1a is a mitochondrial protein up-regulated upon ischemia-reperfusion injury.</title>
        <authorList>
            <person name="Cambier L."/>
            <person name="Lacampagne A."/>
            <person name="Auffray C."/>
            <person name="Pomies P."/>
        </authorList>
    </citation>
    <scope>SUBCELLULAR LOCATION</scope>
    <scope>TISSUE SPECIFICITY</scope>
    <scope>PHOSPHORYLATION</scope>
</reference>
<reference key="6">
    <citation type="journal article" date="2015" name="PLoS Genet.">
        <title>EP4 receptor-associated protein in macrophages ameliorates colitis and colitis-associated tumorigenesis.</title>
        <authorList>
            <person name="Nakatsuji M."/>
            <person name="Minami M."/>
            <person name="Seno H."/>
            <person name="Yasui M."/>
            <person name="Komekado H."/>
            <person name="Higuchi S."/>
            <person name="Fujikawa R."/>
            <person name="Nakanishi Y."/>
            <person name="Fukuda A."/>
            <person name="Kawada K."/>
            <person name="Sakai Y."/>
            <person name="Kita T."/>
            <person name="Libby P."/>
            <person name="Ikeuchi H."/>
            <person name="Yokode M."/>
            <person name="Chiba T."/>
        </authorList>
    </citation>
    <scope>FUNCTION</scope>
    <scope>DISRUPTION PHENOTYPE</scope>
</reference>
<reference key="7">
    <citation type="journal article" date="2016" name="Am. J. Pathol.">
        <title>EP4 receptor-associated protein in microglia promotes inflammation in the brain.</title>
        <authorList>
            <person name="Fujikawa R."/>
            <person name="Higuchi S."/>
            <person name="Nakatsuji M."/>
            <person name="Yasui M."/>
            <person name="Ikedo T."/>
            <person name="Nagata M."/>
            <person name="Yokode M."/>
            <person name="Minami M."/>
        </authorList>
    </citation>
    <scope>FUNCTION</scope>
    <scope>DISRUPTION PHENOTYPE</scope>
</reference>
<reference key="8">
    <citation type="journal article" date="2016" name="J. Immunol.">
        <title>EP4 receptor-associated protein in macrophages protects against bleomycin-induced pulmonary inflammation in mice.</title>
        <authorList>
            <person name="Higuchi S."/>
            <person name="Fujikawa R."/>
            <person name="Ikedo T."/>
            <person name="Hayashi K."/>
            <person name="Yasui M."/>
            <person name="Nagata M."/>
            <person name="Nakatsuji M."/>
            <person name="Yokode M."/>
            <person name="Minami M."/>
        </authorList>
    </citation>
    <scope>PHOSPHORYLATION AT SER-108 AND SER-608</scope>
    <scope>MUTAGENESIS OF SER-108 AND SER-608</scope>
</reference>
<reference key="9">
    <citation type="journal article" date="2017" name="Am. J. Pathol.">
        <title>Deficiency in EP4 receptor-associated protein ameliorates abnormal anxiety-like behavior and brain inflammation in a mouse model of alzheimer disease.</title>
        <authorList>
            <person name="Fujikawa R."/>
            <person name="Higuchi S."/>
            <person name="Nakatsuji M."/>
            <person name="Yasui M."/>
            <person name="Ikedo T."/>
            <person name="Nagata M."/>
            <person name="Hayashi K."/>
            <person name="Yokode M."/>
            <person name="Minami M."/>
        </authorList>
    </citation>
    <scope>DISRUPTION PHENOTYPE</scope>
</reference>
<reference key="10">
    <citation type="journal article" date="2017" name="Biochem. Biophys. Res. Commun.">
        <title>Behavioral abnormalities and reduced norepinephrine in EP4 receptor-associated protein (EPRAP)-deficient mice.</title>
        <authorList>
            <person name="Fujikawa R."/>
            <person name="Higuchi S."/>
            <person name="Ikedo T."/>
            <person name="Nagata M."/>
            <person name="Hayashi K."/>
            <person name="Yang T."/>
            <person name="Miyata T."/>
            <person name="Yokode M."/>
            <person name="Minami M."/>
        </authorList>
    </citation>
    <scope>DISRUPTION PHENOTYPE</scope>
</reference>
<feature type="chain" id="PRO_0000324526" description="Protein fem-1 homolog A-A">
    <location>
        <begin position="1"/>
        <end position="654"/>
    </location>
</feature>
<feature type="repeat" description="ANK 1">
    <location>
        <begin position="2"/>
        <end position="31"/>
    </location>
</feature>
<feature type="repeat" description="ANK 2">
    <location>
        <begin position="40"/>
        <end position="70"/>
    </location>
</feature>
<feature type="repeat" description="ANK 3">
    <location>
        <begin position="82"/>
        <end position="111"/>
    </location>
</feature>
<feature type="repeat" description="ANK 4">
    <location>
        <begin position="115"/>
        <end position="145"/>
    </location>
</feature>
<feature type="repeat" description="ANK 5">
    <location>
        <begin position="149"/>
        <end position="178"/>
    </location>
</feature>
<feature type="repeat" description="ANK 6">
    <location>
        <begin position="182"/>
        <end position="211"/>
    </location>
</feature>
<feature type="repeat" description="ANK 7">
    <location>
        <begin position="214"/>
        <end position="243"/>
    </location>
</feature>
<feature type="repeat" description="TPR 1">
    <location>
        <begin position="283"/>
        <end position="317"/>
    </location>
</feature>
<feature type="repeat" description="TPR 2">
    <location>
        <begin position="375"/>
        <end position="408"/>
    </location>
</feature>
<feature type="repeat" description="ANK 8">
    <location>
        <begin position="519"/>
        <end position="561"/>
    </location>
</feature>
<feature type="repeat" description="ANK 9">
    <location>
        <begin position="565"/>
        <end position="594"/>
    </location>
</feature>
<feature type="region of interest" description="Disordered" evidence="2">
    <location>
        <begin position="242"/>
        <end position="265"/>
    </location>
</feature>
<feature type="compositionally biased region" description="Polar residues" evidence="2">
    <location>
        <begin position="253"/>
        <end position="263"/>
    </location>
</feature>
<feature type="modified residue" description="Phosphoserine" evidence="7">
    <location>
        <position position="108"/>
    </location>
</feature>
<feature type="modified residue" description="Phosphoserine" evidence="7">
    <location>
        <position position="608"/>
    </location>
</feature>
<feature type="mutagenesis site" description="Decreased ability to promote PGE2-EP4-mediated inhibition of inflammation; when associated with A-608." evidence="7">
    <original>S</original>
    <variation>A</variation>
    <location>
        <position position="108"/>
    </location>
</feature>
<feature type="mutagenesis site" description="Decreased ability to promote PGE2-EP4-mediated inhibition of inflammation; when associated with A-108." evidence="7">
    <original>S</original>
    <variation>A</variation>
    <location>
        <position position="608"/>
    </location>
</feature>
<feature type="sequence conflict" description="In Ref. 2; BAE33219." evidence="13" ref="2">
    <original>G</original>
    <variation>E</variation>
    <location>
        <position position="27"/>
    </location>
</feature>
<feature type="sequence conflict" description="In Ref. 2; BAC28699." evidence="13" ref="2">
    <original>D</original>
    <variation>E</variation>
    <location>
        <position position="55"/>
    </location>
</feature>
<feature type="sequence conflict" description="In Ref. 2; BAB23768." evidence="13" ref="2">
    <original>R</original>
    <variation>S</variation>
    <location>
        <position position="111"/>
    </location>
</feature>
<feature type="sequence conflict" description="In Ref. 2; BAC38102." evidence="13" ref="2">
    <original>Q</original>
    <variation>H</variation>
    <location>
        <position position="575"/>
    </location>
</feature>